<protein>
    <recommendedName>
        <fullName>Protein TIC 21, chloroplastic</fullName>
    </recommendedName>
    <alternativeName>
        <fullName>Protein CHLOROPLAST IMPORT APPARATUS 5</fullName>
        <shortName>AtCIA5</shortName>
    </alternativeName>
    <alternativeName>
        <fullName>Protein PERMEASE IN CHLOROPLASTS 1</fullName>
        <shortName>AtPIC1</shortName>
    </alternativeName>
    <alternativeName>
        <fullName>Translocon at the inner envelope membrane of chloroplasts 21</fullName>
        <shortName>AtTIC21</shortName>
    </alternativeName>
</protein>
<comment type="function">
    <text evidence="3 4 5 6">Involved in chloroplast protein import across the inner envelope membrane. Also acts as a chloroplast permease regulating the iron transport and homeostasis. Involved in the uptake and sequestration of iron in plastids.</text>
</comment>
<comment type="subunit">
    <text evidence="2 5">Homomultimer. Part of the translocon complex.</text>
</comment>
<comment type="subcellular location">
    <subcellularLocation>
        <location evidence="7">Plastid</location>
        <location evidence="7">Chloroplast inner membrane</location>
        <topology evidence="7">Multi-pass membrane protein</topology>
    </subcellularLocation>
</comment>
<comment type="tissue specificity">
    <text evidence="3">Ubiquitous. Highest expression in green tissues and very low levels in mature pollen.</text>
</comment>
<comment type="disruption phenotype">
    <text evidence="2 3 4 5">Seedling lethal when grown on soil. Albino or chlorotic dwarfed plants that accumulate unprocessed precursor proteins and chloroplast ferritin clusters when grown in vitro.</text>
</comment>
<evidence type="ECO:0000255" key="1"/>
<evidence type="ECO:0000269" key="2">
    <source>
    </source>
</evidence>
<evidence type="ECO:0000269" key="3">
    <source>
    </source>
</evidence>
<evidence type="ECO:0000269" key="4">
    <source>
    </source>
</evidence>
<evidence type="ECO:0000269" key="5">
    <source>
    </source>
</evidence>
<evidence type="ECO:0000269" key="6">
    <source>
    </source>
</evidence>
<evidence type="ECO:0000305" key="7"/>
<name>TIC21_ARATH</name>
<accession>Q9SHU7</accession>
<keyword id="KW-0150">Chloroplast</keyword>
<keyword id="KW-0903">Direct protein sequencing</keyword>
<keyword id="KW-0472">Membrane</keyword>
<keyword id="KW-0934">Plastid</keyword>
<keyword id="KW-1001">Plastid inner membrane</keyword>
<keyword id="KW-0653">Protein transport</keyword>
<keyword id="KW-1185">Reference proteome</keyword>
<keyword id="KW-0809">Transit peptide</keyword>
<keyword id="KW-0812">Transmembrane</keyword>
<keyword id="KW-1133">Transmembrane helix</keyword>
<keyword id="KW-0813">Transport</keyword>
<organism>
    <name type="scientific">Arabidopsis thaliana</name>
    <name type="common">Mouse-ear cress</name>
    <dbReference type="NCBI Taxonomy" id="3702"/>
    <lineage>
        <taxon>Eukaryota</taxon>
        <taxon>Viridiplantae</taxon>
        <taxon>Streptophyta</taxon>
        <taxon>Embryophyta</taxon>
        <taxon>Tracheophyta</taxon>
        <taxon>Spermatophyta</taxon>
        <taxon>Magnoliopsida</taxon>
        <taxon>eudicotyledons</taxon>
        <taxon>Gunneridae</taxon>
        <taxon>Pentapetalae</taxon>
        <taxon>rosids</taxon>
        <taxon>malvids</taxon>
        <taxon>Brassicales</taxon>
        <taxon>Brassicaceae</taxon>
        <taxon>Camelineae</taxon>
        <taxon>Arabidopsis</taxon>
    </lineage>
</organism>
<feature type="transit peptide" description="Chloroplast" evidence="2">
    <location>
        <begin position="1"/>
        <end position="90"/>
    </location>
</feature>
<feature type="chain" id="PRO_0000413207" description="Protein TIC 21, chloroplastic">
    <location>
        <begin position="91"/>
        <end position="296"/>
    </location>
</feature>
<feature type="transmembrane region" description="Helical" evidence="1">
    <location>
        <begin position="125"/>
        <end position="145"/>
    </location>
</feature>
<feature type="transmembrane region" description="Helical" evidence="1">
    <location>
        <begin position="156"/>
        <end position="176"/>
    </location>
</feature>
<feature type="transmembrane region" description="Helical" evidence="1">
    <location>
        <begin position="208"/>
        <end position="228"/>
    </location>
</feature>
<feature type="transmembrane region" description="Helical" evidence="1">
    <location>
        <begin position="250"/>
        <end position="270"/>
    </location>
</feature>
<feature type="mutagenesis site" description="Strongly reduced protein translocation across the inner envelope membrane." evidence="2">
    <original>K</original>
    <variation>C</variation>
    <location>
        <position position="112"/>
    </location>
</feature>
<feature type="mutagenesis site" description="In cia5-1; albino plants." evidence="2">
    <original>G</original>
    <variation>E</variation>
    <location>
        <position position="205"/>
    </location>
</feature>
<reference key="1">
    <citation type="journal article" date="2006" name="Plant Cell">
        <title>Tic21 is an essential translocon component for protein translocation across the chloroplast inner envelope membrane.</title>
        <authorList>
            <person name="Teng Y.S."/>
            <person name="Su Y.S."/>
            <person name="Chen L.J."/>
            <person name="Lee Y.J."/>
            <person name="Hwang I."/>
            <person name="Li H.M."/>
        </authorList>
    </citation>
    <scope>NUCLEOTIDE SEQUENCE [GENOMIC DNA]</scope>
    <scope>MUTAGENESIS OF LYS-112 AND GLY-205</scope>
    <scope>PROTEIN SEQUENCE OF N-TERMINUS</scope>
    <scope>SUBCELLULAR LOCATION</scope>
    <scope>SUBUNIT</scope>
    <scope>DISRUPTION PHENOTYPE</scope>
</reference>
<reference key="2">
    <citation type="journal article" date="1999" name="Nature">
        <title>Sequence and analysis of chromosome 2 of the plant Arabidopsis thaliana.</title>
        <authorList>
            <person name="Lin X."/>
            <person name="Kaul S."/>
            <person name="Rounsley S.D."/>
            <person name="Shea T.P."/>
            <person name="Benito M.-I."/>
            <person name="Town C.D."/>
            <person name="Fujii C.Y."/>
            <person name="Mason T.M."/>
            <person name="Bowman C.L."/>
            <person name="Barnstead M.E."/>
            <person name="Feldblyum T.V."/>
            <person name="Buell C.R."/>
            <person name="Ketchum K.A."/>
            <person name="Lee J.J."/>
            <person name="Ronning C.M."/>
            <person name="Koo H.L."/>
            <person name="Moffat K.S."/>
            <person name="Cronin L.A."/>
            <person name="Shen M."/>
            <person name="Pai G."/>
            <person name="Van Aken S."/>
            <person name="Umayam L."/>
            <person name="Tallon L.J."/>
            <person name="Gill J.E."/>
            <person name="Adams M.D."/>
            <person name="Carrera A.J."/>
            <person name="Creasy T.H."/>
            <person name="Goodman H.M."/>
            <person name="Somerville C.R."/>
            <person name="Copenhaver G.P."/>
            <person name="Preuss D."/>
            <person name="Nierman W.C."/>
            <person name="White O."/>
            <person name="Eisen J.A."/>
            <person name="Salzberg S.L."/>
            <person name="Fraser C.M."/>
            <person name="Venter J.C."/>
        </authorList>
    </citation>
    <scope>NUCLEOTIDE SEQUENCE [LARGE SCALE GENOMIC DNA]</scope>
    <source>
        <strain>cv. Columbia</strain>
    </source>
</reference>
<reference key="3">
    <citation type="journal article" date="2017" name="Plant J.">
        <title>Araport11: a complete reannotation of the Arabidopsis thaliana reference genome.</title>
        <authorList>
            <person name="Cheng C.Y."/>
            <person name="Krishnakumar V."/>
            <person name="Chan A.P."/>
            <person name="Thibaud-Nissen F."/>
            <person name="Schobel S."/>
            <person name="Town C.D."/>
        </authorList>
    </citation>
    <scope>GENOME REANNOTATION</scope>
    <source>
        <strain>cv. Columbia</strain>
    </source>
</reference>
<reference key="4">
    <citation type="journal article" date="2003" name="Science">
        <title>Empirical analysis of transcriptional activity in the Arabidopsis genome.</title>
        <authorList>
            <person name="Yamada K."/>
            <person name="Lim J."/>
            <person name="Dale J.M."/>
            <person name="Chen H."/>
            <person name="Shinn P."/>
            <person name="Palm C.J."/>
            <person name="Southwick A.M."/>
            <person name="Wu H.C."/>
            <person name="Kim C.J."/>
            <person name="Nguyen M."/>
            <person name="Pham P.K."/>
            <person name="Cheuk R.F."/>
            <person name="Karlin-Newmann G."/>
            <person name="Liu S.X."/>
            <person name="Lam B."/>
            <person name="Sakano H."/>
            <person name="Wu T."/>
            <person name="Yu G."/>
            <person name="Miranda M."/>
            <person name="Quach H.L."/>
            <person name="Tripp M."/>
            <person name="Chang C.H."/>
            <person name="Lee J.M."/>
            <person name="Toriumi M.J."/>
            <person name="Chan M.M."/>
            <person name="Tang C.C."/>
            <person name="Onodera C.S."/>
            <person name="Deng J.M."/>
            <person name="Akiyama K."/>
            <person name="Ansari Y."/>
            <person name="Arakawa T."/>
            <person name="Banh J."/>
            <person name="Banno F."/>
            <person name="Bowser L."/>
            <person name="Brooks S.Y."/>
            <person name="Carninci P."/>
            <person name="Chao Q."/>
            <person name="Choy N."/>
            <person name="Enju A."/>
            <person name="Goldsmith A.D."/>
            <person name="Gurjal M."/>
            <person name="Hansen N.F."/>
            <person name="Hayashizaki Y."/>
            <person name="Johnson-Hopson C."/>
            <person name="Hsuan V.W."/>
            <person name="Iida K."/>
            <person name="Karnes M."/>
            <person name="Khan S."/>
            <person name="Koesema E."/>
            <person name="Ishida J."/>
            <person name="Jiang P.X."/>
            <person name="Jones T."/>
            <person name="Kawai J."/>
            <person name="Kamiya A."/>
            <person name="Meyers C."/>
            <person name="Nakajima M."/>
            <person name="Narusaka M."/>
            <person name="Seki M."/>
            <person name="Sakurai T."/>
            <person name="Satou M."/>
            <person name="Tamse R."/>
            <person name="Vaysberg M."/>
            <person name="Wallender E.K."/>
            <person name="Wong C."/>
            <person name="Yamamura Y."/>
            <person name="Yuan S."/>
            <person name="Shinozaki K."/>
            <person name="Davis R.W."/>
            <person name="Theologis A."/>
            <person name="Ecker J.R."/>
        </authorList>
    </citation>
    <scope>NUCLEOTIDE SEQUENCE [LARGE SCALE MRNA]</scope>
    <source>
        <strain>cv. Columbia</strain>
    </source>
</reference>
<reference key="5">
    <citation type="journal article" date="2007" name="Plant Cell">
        <title>PIC1, an ancient permease in Arabidopsis chloroplasts, mediates iron transport.</title>
        <authorList>
            <person name="Duy D."/>
            <person name="Wanner G."/>
            <person name="Meda A.R."/>
            <person name="von Wiren N."/>
            <person name="Soll J."/>
            <person name="Philippar K."/>
        </authorList>
    </citation>
    <scope>FUNCTION</scope>
    <scope>SUBCELLULAR LOCATION</scope>
    <scope>TISSUE SPECIFICITY</scope>
    <scope>DISRUPTION PHENOTYPE</scope>
</reference>
<reference key="6">
    <citation type="journal article" date="2009" name="J. Evol. Biol.">
        <title>Translocons on the inner and outer envelopes of chloroplasts share similar evolutionary origin in Arabidopsis thaliana.</title>
        <authorList>
            <person name="Lv H.X."/>
            <person name="Guo G.Q."/>
            <person name="Yang Z.N."/>
        </authorList>
    </citation>
    <scope>FUNCTION</scope>
    <scope>DISRUPTION PHENOTYPE</scope>
</reference>
<reference key="7">
    <citation type="journal article" date="2009" name="Plant Cell">
        <title>A 1-megadalton translocation complex containing Tic20 and Tic21 mediates chloroplast protein import at the inner envelope membrane.</title>
        <authorList>
            <person name="Kikuchi S."/>
            <person name="Oishi M."/>
            <person name="Hirabayashi Y."/>
            <person name="Lee D.W."/>
            <person name="Hwang I."/>
            <person name="Nakai M."/>
        </authorList>
    </citation>
    <scope>FUNCTION</scope>
    <scope>IDENTIFICATION IN TRANSLOCON COMPLEX</scope>
    <scope>DISRUPTION PHENOTYPE</scope>
</reference>
<reference key="8">
    <citation type="journal article" date="2011" name="Plant Physiol.">
        <title>The chloroplast permease PIC1 regulates plant growth and development by directing homeostasis and transport of iron.</title>
        <authorList>
            <person name="Duy D."/>
            <person name="Stuebe R."/>
            <person name="Wanner G."/>
            <person name="Philippar K."/>
        </authorList>
    </citation>
    <scope>FUNCTION</scope>
</reference>
<sequence>MQSLLLPPASSSGVSAVALRPGFQHSFNHQSLSTRSLPLFNPLLLAPKKKTTISSYQSPPSLSVYGFQIGGSKPSFTPSTVAFSYPTSPSSVPGDNEVDKAKLAQVAKRLEKTSRYFKRLGSIGFWGQLVSTVVAAVILSFSIVVTGKPTSPATFYATASGIAAAFVSVFWSFGYIRLSERLRRTSIDPAKAPPRADVVKGLRSGIMVNILGMGSALLGMQATVGFLVAKALTTSANPFYQGVSQGYSPVLALDVFLVQASANTLLSHFLGLVCSLELLRSVTVPNSESVVVPKVA</sequence>
<dbReference type="EMBL" id="AC007267">
    <property type="protein sequence ID" value="AAD26904.1"/>
    <property type="molecule type" value="Genomic_DNA"/>
</dbReference>
<dbReference type="EMBL" id="CP002685">
    <property type="protein sequence ID" value="AEC06383.1"/>
    <property type="molecule type" value="Genomic_DNA"/>
</dbReference>
<dbReference type="EMBL" id="AY057510">
    <property type="protein sequence ID" value="AAL09751.1"/>
    <property type="molecule type" value="mRNA"/>
</dbReference>
<dbReference type="EMBL" id="AY065215">
    <property type="protein sequence ID" value="AAL38691.1"/>
    <property type="molecule type" value="mRNA"/>
</dbReference>
<dbReference type="EMBL" id="AY122931">
    <property type="protein sequence ID" value="AAM67464.1"/>
    <property type="molecule type" value="mRNA"/>
</dbReference>
<dbReference type="PIR" id="B84527">
    <property type="entry name" value="B84527"/>
</dbReference>
<dbReference type="RefSeq" id="NP_565372.1">
    <property type="nucleotide sequence ID" value="NM_127089.4"/>
</dbReference>
<dbReference type="FunCoup" id="Q9SHU7">
    <property type="interactions" value="963"/>
</dbReference>
<dbReference type="STRING" id="3702.Q9SHU7"/>
<dbReference type="TCDB" id="3.A.9.1.2">
    <property type="family name" value="the chloroplast envelope protein translocase (cept or tic-toc) family"/>
</dbReference>
<dbReference type="iPTMnet" id="Q9SHU7"/>
<dbReference type="PaxDb" id="3702-AT2G15290.1"/>
<dbReference type="ProteomicsDB" id="246465"/>
<dbReference type="EnsemblPlants" id="AT2G15290.1">
    <property type="protein sequence ID" value="AT2G15290.1"/>
    <property type="gene ID" value="AT2G15290"/>
</dbReference>
<dbReference type="GeneID" id="816018"/>
<dbReference type="Gramene" id="AT2G15290.1">
    <property type="protein sequence ID" value="AT2G15290.1"/>
    <property type="gene ID" value="AT2G15290"/>
</dbReference>
<dbReference type="KEGG" id="ath:AT2G15290"/>
<dbReference type="Araport" id="AT2G15290"/>
<dbReference type="TAIR" id="AT2G15290">
    <property type="gene designation" value="TIC21"/>
</dbReference>
<dbReference type="eggNOG" id="ENOG502QTAI">
    <property type="taxonomic scope" value="Eukaryota"/>
</dbReference>
<dbReference type="HOGENOM" id="CLU_083138_0_0_1"/>
<dbReference type="InParanoid" id="Q9SHU7"/>
<dbReference type="OMA" id="GIFWAVC"/>
<dbReference type="PhylomeDB" id="Q9SHU7"/>
<dbReference type="PRO" id="PR:Q9SHU7"/>
<dbReference type="Proteomes" id="UP000006548">
    <property type="component" value="Chromosome 2"/>
</dbReference>
<dbReference type="ExpressionAtlas" id="Q9SHU7">
    <property type="expression patterns" value="baseline and differential"/>
</dbReference>
<dbReference type="GO" id="GO:0009507">
    <property type="term" value="C:chloroplast"/>
    <property type="evidence" value="ECO:0007005"/>
    <property type="project" value="TAIR"/>
</dbReference>
<dbReference type="GO" id="GO:0009941">
    <property type="term" value="C:chloroplast envelope"/>
    <property type="evidence" value="ECO:0000314"/>
    <property type="project" value="TAIR"/>
</dbReference>
<dbReference type="GO" id="GO:0009706">
    <property type="term" value="C:chloroplast inner membrane"/>
    <property type="evidence" value="ECO:0000314"/>
    <property type="project" value="TAIR"/>
</dbReference>
<dbReference type="GO" id="GO:0005739">
    <property type="term" value="C:mitochondrion"/>
    <property type="evidence" value="ECO:0007005"/>
    <property type="project" value="TAIR"/>
</dbReference>
<dbReference type="GO" id="GO:0005375">
    <property type="term" value="F:copper ion transmembrane transporter activity"/>
    <property type="evidence" value="ECO:0000316"/>
    <property type="project" value="TAIR"/>
</dbReference>
<dbReference type="GO" id="GO:0005381">
    <property type="term" value="F:iron ion transmembrane transporter activity"/>
    <property type="evidence" value="ECO:0000316"/>
    <property type="project" value="TAIR"/>
</dbReference>
<dbReference type="GO" id="GO:0042803">
    <property type="term" value="F:protein homodimerization activity"/>
    <property type="evidence" value="ECO:0000353"/>
    <property type="project" value="TAIR"/>
</dbReference>
<dbReference type="GO" id="GO:0045037">
    <property type="term" value="P:protein import into chloroplast stroma"/>
    <property type="evidence" value="ECO:0000315"/>
    <property type="project" value="TAIR"/>
</dbReference>
<dbReference type="InterPro" id="IPR022051">
    <property type="entry name" value="DUF3611"/>
</dbReference>
<dbReference type="PANTHER" id="PTHR34548">
    <property type="entry name" value="PROTEIN TIC 21, CHLOROPLASTIC"/>
    <property type="match status" value="1"/>
</dbReference>
<dbReference type="PANTHER" id="PTHR34548:SF2">
    <property type="entry name" value="PROTEIN TIC 21, CHLOROPLASTIC"/>
    <property type="match status" value="1"/>
</dbReference>
<dbReference type="Pfam" id="PF12263">
    <property type="entry name" value="DUF3611"/>
    <property type="match status" value="1"/>
</dbReference>
<gene>
    <name type="primary">TIC21</name>
    <name type="synonym">CIA5</name>
    <name type="synonym">PIC1</name>
    <name type="ordered locus">At2g15290</name>
    <name type="ORF">F27O10.6</name>
</gene>
<proteinExistence type="evidence at protein level"/>